<feature type="signal peptide" evidence="2">
    <location>
        <begin position="1"/>
        <end position="29"/>
    </location>
</feature>
<feature type="chain" id="PRO_0000003969" description="Protocadherin gamma-A11">
    <location>
        <begin position="30"/>
        <end position="935"/>
    </location>
</feature>
<feature type="topological domain" description="Extracellular" evidence="2">
    <location>
        <begin position="30"/>
        <end position="693"/>
    </location>
</feature>
<feature type="transmembrane region" description="Helical" evidence="2">
    <location>
        <begin position="694"/>
        <end position="714"/>
    </location>
</feature>
<feature type="topological domain" description="Cytoplasmic" evidence="2">
    <location>
        <begin position="715"/>
        <end position="935"/>
    </location>
</feature>
<feature type="domain" description="Cadherin 1" evidence="3">
    <location>
        <begin position="30"/>
        <end position="134"/>
    </location>
</feature>
<feature type="domain" description="Cadherin 2" evidence="3">
    <location>
        <begin position="135"/>
        <end position="243"/>
    </location>
</feature>
<feature type="domain" description="Cadherin 3" evidence="3">
    <location>
        <begin position="244"/>
        <end position="348"/>
    </location>
</feature>
<feature type="domain" description="Cadherin 4" evidence="3">
    <location>
        <begin position="349"/>
        <end position="453"/>
    </location>
</feature>
<feature type="domain" description="Cadherin 5" evidence="3">
    <location>
        <begin position="454"/>
        <end position="563"/>
    </location>
</feature>
<feature type="domain" description="Cadherin 6" evidence="3">
    <location>
        <begin position="571"/>
        <end position="677"/>
    </location>
</feature>
<feature type="region of interest" description="Disordered" evidence="4">
    <location>
        <begin position="805"/>
        <end position="844"/>
    </location>
</feature>
<feature type="region of interest" description="Disordered" evidence="4">
    <location>
        <begin position="905"/>
        <end position="935"/>
    </location>
</feature>
<feature type="compositionally biased region" description="Polar residues" evidence="4">
    <location>
        <begin position="807"/>
        <end position="844"/>
    </location>
</feature>
<feature type="compositionally biased region" description="Basic residues" evidence="4">
    <location>
        <begin position="925"/>
        <end position="935"/>
    </location>
</feature>
<feature type="glycosylation site" description="N-linked (GlcNAc...) asparagine" evidence="2">
    <location>
        <position position="48"/>
    </location>
</feature>
<feature type="glycosylation site" description="N-linked (GlcNAc...) asparagine" evidence="2">
    <location>
        <position position="255"/>
    </location>
</feature>
<feature type="glycosylation site" description="N-linked (GlcNAc...) asparagine" evidence="2">
    <location>
        <position position="266"/>
    </location>
</feature>
<feature type="glycosylation site" description="N-linked (GlcNAc...) asparagine" evidence="2">
    <location>
        <position position="420"/>
    </location>
</feature>
<feature type="glycosylation site" description="N-linked (GlcNAc...) asparagine" evidence="2">
    <location>
        <position position="546"/>
    </location>
</feature>
<proteinExistence type="inferred from homology"/>
<sequence length="935" mass="101526">MANRLQRGDRSRLLLLLCIFLGTLRGFRARQIRYSVPEETEKGSFVGNISKDLGLEPRELAKRGVRIVSRGKTQLFAVNPRSGSLITAGRIDREELCETVSSCFLNMELLVEDTLKIYGVEVEIIDINDNAPSFQEDEVEIKVSEHAIPGARFALPNARDPDVGVNSLQSYQLSPNNYFSLQLRGRTDGAKNPELVLEGSLDREKEAAHLLLLTALDGGDPIRKGAVPIRVVVLDVNDHIPMFTQSVYRVSVPENISSGTRVLMVNATDPDEGINGEVMYSFRNMESKASEIFQLDSQTGEVQVRGSLDFEKYRFYEMEIQGQDGGGLFTTTTMLITVVDVNDNAPEITITSSINSILENSPPGTVIALLNVQDQDSGENGQVSCFIPNHLPFKLEKTYGNYYKLITSRVLDRELVQSYNITLTATDQGSPPLSAETHIWLNVADDNDNPPVFPHSSYSAYIPENNPRGASIFSVTALDPDSKQNALVTYSLTDDTVQGVPLSSYVSINSNTGVLYALQSFDYEQFRDLQLRVIARDSGDPPLSSNVSLSLFVLDQNDNAPEILYPALPTDGSTGVELAPRSAEPGYLVTKVVAVDKDSGQNAWLSYRLLKASEPGLFAVGEHTGEVRTARALLDRDALKQSLVVAVQDHGQPPLSATVTLTVAVADSIPEVLADLGSLESLANSEASDLSLYLVVAVAAVSCIFLVFVIVLLALRLWRWHKSRLLQASEGGLAGMPTSHFVGVDGVQAFLQTYSHEVSLIADSQKSHLIFPQPNYGDTLISQESCEKSEPLLIAEDSAIILGKCDPTSNQQAPPNTDWRFSQAQRPGTSGSQNGDDTGTWPNNQFDTEMLQAMILASASEAADGSSTLGGGAGTMGLSARYGPQFTLQHVPDYRQNVYIPGSNATLTNAAGKRDGKAPAGGNGNKKKSGKKEKK</sequence>
<evidence type="ECO:0000250" key="1"/>
<evidence type="ECO:0000255" key="2"/>
<evidence type="ECO:0000255" key="3">
    <source>
        <dbReference type="PROSITE-ProRule" id="PRU00043"/>
    </source>
</evidence>
<evidence type="ECO:0000256" key="4">
    <source>
        <dbReference type="SAM" id="MobiDB-lite"/>
    </source>
</evidence>
<name>PCDGB_PANTR</name>
<protein>
    <recommendedName>
        <fullName>Protocadherin gamma-A11</fullName>
        <shortName>PCDH-gamma-A11</shortName>
    </recommendedName>
</protein>
<reference key="1">
    <citation type="journal article" date="2005" name="Nature">
        <title>Initial sequence of the chimpanzee genome and comparison with the human genome.</title>
        <authorList>
            <consortium name="Chimpanzee sequencing and analysis consortium"/>
        </authorList>
    </citation>
    <scope>NUCLEOTIDE SEQUENCE [LARGE SCALE GENOMIC DNA]</scope>
</reference>
<reference key="2">
    <citation type="journal article" date="2005" name="Genetics">
        <title>Comparative genomics and diversifying selection of the clustered vertebrate protocadherin genes.</title>
        <authorList>
            <person name="Wu Q."/>
        </authorList>
    </citation>
    <scope>IDENTIFICATION</scope>
</reference>
<organism>
    <name type="scientific">Pan troglodytes</name>
    <name type="common">Chimpanzee</name>
    <dbReference type="NCBI Taxonomy" id="9598"/>
    <lineage>
        <taxon>Eukaryota</taxon>
        <taxon>Metazoa</taxon>
        <taxon>Chordata</taxon>
        <taxon>Craniata</taxon>
        <taxon>Vertebrata</taxon>
        <taxon>Euteleostomi</taxon>
        <taxon>Mammalia</taxon>
        <taxon>Eutheria</taxon>
        <taxon>Euarchontoglires</taxon>
        <taxon>Primates</taxon>
        <taxon>Haplorrhini</taxon>
        <taxon>Catarrhini</taxon>
        <taxon>Hominidae</taxon>
        <taxon>Pan</taxon>
    </lineage>
</organism>
<comment type="function">
    <text>Potential calcium-dependent cell-adhesion protein. May be involved in the establishment and maintenance of specific neuronal connections in the brain.</text>
</comment>
<comment type="subcellular location">
    <subcellularLocation>
        <location evidence="1">Cell membrane</location>
        <topology evidence="1">Single-pass type I membrane protein</topology>
    </subcellularLocation>
</comment>
<accession>Q5DRC0</accession>
<dbReference type="RefSeq" id="NP_001076028.1">
    <property type="nucleotide sequence ID" value="NM_001082559.4"/>
</dbReference>
<dbReference type="SMR" id="Q5DRC0"/>
<dbReference type="FunCoup" id="Q5DRC0">
    <property type="interactions" value="247"/>
</dbReference>
<dbReference type="GlyCosmos" id="Q5DRC0">
    <property type="glycosylation" value="5 sites, No reported glycans"/>
</dbReference>
<dbReference type="Ensembl" id="ENSPTRT00000061822.4">
    <property type="protein sequence ID" value="ENSPTRP00000054365.3"/>
    <property type="gene ID" value="ENSPTRG00000017346.7"/>
</dbReference>
<dbReference type="GeneID" id="100034693"/>
<dbReference type="KEGG" id="ptr:100034693"/>
<dbReference type="CTD" id="56105"/>
<dbReference type="GeneTree" id="ENSGT00940000162232"/>
<dbReference type="InParanoid" id="Q5DRC0"/>
<dbReference type="OrthoDB" id="11541at9604"/>
<dbReference type="Proteomes" id="UP000002277">
    <property type="component" value="Chromosome 5"/>
</dbReference>
<dbReference type="Bgee" id="ENSPTRG00000017346">
    <property type="expression patterns" value="Expressed in dorsolateral prefrontal cortex and 21 other cell types or tissues"/>
</dbReference>
<dbReference type="GO" id="GO:0005886">
    <property type="term" value="C:plasma membrane"/>
    <property type="evidence" value="ECO:0007669"/>
    <property type="project" value="UniProtKB-SubCell"/>
</dbReference>
<dbReference type="GO" id="GO:0005509">
    <property type="term" value="F:calcium ion binding"/>
    <property type="evidence" value="ECO:0007669"/>
    <property type="project" value="InterPro"/>
</dbReference>
<dbReference type="GO" id="GO:0007156">
    <property type="term" value="P:homophilic cell adhesion via plasma membrane adhesion molecules"/>
    <property type="evidence" value="ECO:0007669"/>
    <property type="project" value="InterPro"/>
</dbReference>
<dbReference type="GO" id="GO:0007399">
    <property type="term" value="P:nervous system development"/>
    <property type="evidence" value="ECO:0007669"/>
    <property type="project" value="UniProtKB-ARBA"/>
</dbReference>
<dbReference type="CDD" id="cd11304">
    <property type="entry name" value="Cadherin_repeat"/>
    <property type="match status" value="6"/>
</dbReference>
<dbReference type="FunFam" id="2.60.40.60:FF:000004">
    <property type="entry name" value="Protocadherin 1 gamma 2"/>
    <property type="match status" value="1"/>
</dbReference>
<dbReference type="FunFam" id="2.60.40.60:FF:000001">
    <property type="entry name" value="Protocadherin alpha 2"/>
    <property type="match status" value="1"/>
</dbReference>
<dbReference type="FunFam" id="2.60.40.60:FF:000002">
    <property type="entry name" value="Protocadherin alpha 2"/>
    <property type="match status" value="1"/>
</dbReference>
<dbReference type="FunFam" id="2.60.40.60:FF:000006">
    <property type="entry name" value="Protocadherin alpha 2"/>
    <property type="match status" value="1"/>
</dbReference>
<dbReference type="FunFam" id="2.60.40.60:FF:000129">
    <property type="entry name" value="protocadherin alpha-C2 isoform X1"/>
    <property type="match status" value="1"/>
</dbReference>
<dbReference type="FunFam" id="2.60.40.60:FF:000018">
    <property type="entry name" value="Protocadherin gamma c3"/>
    <property type="match status" value="1"/>
</dbReference>
<dbReference type="Gene3D" id="2.60.40.60">
    <property type="entry name" value="Cadherins"/>
    <property type="match status" value="6"/>
</dbReference>
<dbReference type="InterPro" id="IPR002126">
    <property type="entry name" value="Cadherin-like_dom"/>
</dbReference>
<dbReference type="InterPro" id="IPR015919">
    <property type="entry name" value="Cadherin-like_sf"/>
</dbReference>
<dbReference type="InterPro" id="IPR032455">
    <property type="entry name" value="Cadherin_C"/>
</dbReference>
<dbReference type="InterPro" id="IPR031904">
    <property type="entry name" value="Cadherin_CBD"/>
</dbReference>
<dbReference type="InterPro" id="IPR020894">
    <property type="entry name" value="Cadherin_CS"/>
</dbReference>
<dbReference type="InterPro" id="IPR013164">
    <property type="entry name" value="Cadherin_N"/>
</dbReference>
<dbReference type="InterPro" id="IPR050174">
    <property type="entry name" value="Protocadherin/Cadherin-CA"/>
</dbReference>
<dbReference type="PANTHER" id="PTHR24028">
    <property type="entry name" value="CADHERIN-87A"/>
    <property type="match status" value="1"/>
</dbReference>
<dbReference type="PANTHER" id="PTHR24028:SF84">
    <property type="entry name" value="PROTOCADHERIN GAMMA-A11"/>
    <property type="match status" value="1"/>
</dbReference>
<dbReference type="Pfam" id="PF00028">
    <property type="entry name" value="Cadherin"/>
    <property type="match status" value="4"/>
</dbReference>
<dbReference type="Pfam" id="PF08266">
    <property type="entry name" value="Cadherin_2"/>
    <property type="match status" value="1"/>
</dbReference>
<dbReference type="Pfam" id="PF16492">
    <property type="entry name" value="Cadherin_C_2"/>
    <property type="match status" value="1"/>
</dbReference>
<dbReference type="Pfam" id="PF15974">
    <property type="entry name" value="Cadherin_tail"/>
    <property type="match status" value="1"/>
</dbReference>
<dbReference type="PRINTS" id="PR00205">
    <property type="entry name" value="CADHERIN"/>
</dbReference>
<dbReference type="SMART" id="SM00112">
    <property type="entry name" value="CA"/>
    <property type="match status" value="6"/>
</dbReference>
<dbReference type="SUPFAM" id="SSF49313">
    <property type="entry name" value="Cadherin-like"/>
    <property type="match status" value="6"/>
</dbReference>
<dbReference type="PROSITE" id="PS00232">
    <property type="entry name" value="CADHERIN_1"/>
    <property type="match status" value="5"/>
</dbReference>
<dbReference type="PROSITE" id="PS50268">
    <property type="entry name" value="CADHERIN_2"/>
    <property type="match status" value="6"/>
</dbReference>
<keyword id="KW-0106">Calcium</keyword>
<keyword id="KW-0130">Cell adhesion</keyword>
<keyword id="KW-1003">Cell membrane</keyword>
<keyword id="KW-0325">Glycoprotein</keyword>
<keyword id="KW-0472">Membrane</keyword>
<keyword id="KW-1185">Reference proteome</keyword>
<keyword id="KW-0677">Repeat</keyword>
<keyword id="KW-0732">Signal</keyword>
<keyword id="KW-0812">Transmembrane</keyword>
<keyword id="KW-1133">Transmembrane helix</keyword>
<gene>
    <name type="primary">PCDHGA11</name>
</gene>